<reference key="1">
    <citation type="journal article" date="2006" name="PLoS Biol.">
        <title>The genome of deep-sea vent chemolithoautotroph Thiomicrospira crunogena XCL-2.</title>
        <authorList>
            <person name="Scott K.M."/>
            <person name="Sievert S.M."/>
            <person name="Abril F.N."/>
            <person name="Ball L.A."/>
            <person name="Barrett C.J."/>
            <person name="Blake R.A."/>
            <person name="Boller A.J."/>
            <person name="Chain P.S.G."/>
            <person name="Clark J.A."/>
            <person name="Davis C.R."/>
            <person name="Detter C."/>
            <person name="Do K.F."/>
            <person name="Dobrinski K.P."/>
            <person name="Faza B.I."/>
            <person name="Fitzpatrick K.A."/>
            <person name="Freyermuth S.K."/>
            <person name="Harmer T.L."/>
            <person name="Hauser L.J."/>
            <person name="Huegler M."/>
            <person name="Kerfeld C.A."/>
            <person name="Klotz M.G."/>
            <person name="Kong W.W."/>
            <person name="Land M."/>
            <person name="Lapidus A."/>
            <person name="Larimer F.W."/>
            <person name="Longo D.L."/>
            <person name="Lucas S."/>
            <person name="Malfatti S.A."/>
            <person name="Massey S.E."/>
            <person name="Martin D.D."/>
            <person name="McCuddin Z."/>
            <person name="Meyer F."/>
            <person name="Moore J.L."/>
            <person name="Ocampo L.H. Jr."/>
            <person name="Paul J.H."/>
            <person name="Paulsen I.T."/>
            <person name="Reep D.K."/>
            <person name="Ren Q."/>
            <person name="Ross R.L."/>
            <person name="Sato P.Y."/>
            <person name="Thomas P."/>
            <person name="Tinkham L.E."/>
            <person name="Zeruth G.T."/>
        </authorList>
    </citation>
    <scope>NUCLEOTIDE SEQUENCE [LARGE SCALE GENOMIC DNA]</scope>
    <source>
        <strain>DSM 25203 / XCL-2</strain>
    </source>
</reference>
<keyword id="KW-0028">Amino-acid biosynthesis</keyword>
<keyword id="KW-0170">Cobalt</keyword>
<keyword id="KW-0220">Diaminopimelate biosynthesis</keyword>
<keyword id="KW-0378">Hydrolase</keyword>
<keyword id="KW-0457">Lysine biosynthesis</keyword>
<keyword id="KW-0479">Metal-binding</keyword>
<keyword id="KW-0862">Zinc</keyword>
<evidence type="ECO:0000255" key="1">
    <source>
        <dbReference type="HAMAP-Rule" id="MF_01690"/>
    </source>
</evidence>
<feature type="chain" id="PRO_0000375763" description="Succinyl-diaminopimelate desuccinylase">
    <location>
        <begin position="1"/>
        <end position="378"/>
    </location>
</feature>
<feature type="active site" evidence="1">
    <location>
        <position position="68"/>
    </location>
</feature>
<feature type="active site" description="Proton acceptor" evidence="1">
    <location>
        <position position="134"/>
    </location>
</feature>
<feature type="binding site" evidence="1">
    <location>
        <position position="66"/>
    </location>
    <ligand>
        <name>Zn(2+)</name>
        <dbReference type="ChEBI" id="CHEBI:29105"/>
        <label>1</label>
    </ligand>
</feature>
<feature type="binding site" evidence="1">
    <location>
        <position position="100"/>
    </location>
    <ligand>
        <name>Zn(2+)</name>
        <dbReference type="ChEBI" id="CHEBI:29105"/>
        <label>1</label>
    </ligand>
</feature>
<feature type="binding site" evidence="1">
    <location>
        <position position="100"/>
    </location>
    <ligand>
        <name>Zn(2+)</name>
        <dbReference type="ChEBI" id="CHEBI:29105"/>
        <label>2</label>
    </ligand>
</feature>
<feature type="binding site" evidence="1">
    <location>
        <position position="135"/>
    </location>
    <ligand>
        <name>Zn(2+)</name>
        <dbReference type="ChEBI" id="CHEBI:29105"/>
        <label>2</label>
    </ligand>
</feature>
<feature type="binding site" evidence="1">
    <location>
        <position position="163"/>
    </location>
    <ligand>
        <name>Zn(2+)</name>
        <dbReference type="ChEBI" id="CHEBI:29105"/>
        <label>1</label>
    </ligand>
</feature>
<feature type="binding site" evidence="1">
    <location>
        <position position="350"/>
    </location>
    <ligand>
        <name>Zn(2+)</name>
        <dbReference type="ChEBI" id="CHEBI:29105"/>
        <label>2</label>
    </ligand>
</feature>
<sequence length="378" mass="41064">MSETIQLAQKLIQTESVTPNDNGCQTLIADYLKPLGFDIEPMPFGEVENLWARAGKDGPVIVFAGHTDVVPTGPEEKWTHPPFSAHIDADGIMYGRGTADMKSSIACFMVATKQFIKQYPDFKGSIAFLITSDEEGPAVNGTVKVIEALEARNEKFEYCLVGEPSSSNTLGDSIKNGRRGSLSGHLTIKGIQGHIAYPQLAENPIHTLSPALSDMVNKVWDKGNDYFPPTSFQVSNIHSGTGATNVIPGDCVVDFNFRFSTEQTPESLKAGIHQILDSHQLNYDLDWNLSGLPFITPADGELIQAVSKAIEQEMGTTPELSTGGGTSDGRFIAQTGAQVIELGPLNDTIHKIDERVSVSDLEKLTQIYRNTLINLLVT</sequence>
<comment type="function">
    <text evidence="1">Catalyzes the hydrolysis of N-succinyl-L,L-diaminopimelic acid (SDAP), forming succinate and LL-2,6-diaminopimelate (DAP), an intermediate involved in the bacterial biosynthesis of lysine and meso-diaminopimelic acid, an essential component of bacterial cell walls.</text>
</comment>
<comment type="catalytic activity">
    <reaction evidence="1">
        <text>N-succinyl-(2S,6S)-2,6-diaminopimelate + H2O = (2S,6S)-2,6-diaminopimelate + succinate</text>
        <dbReference type="Rhea" id="RHEA:22608"/>
        <dbReference type="ChEBI" id="CHEBI:15377"/>
        <dbReference type="ChEBI" id="CHEBI:30031"/>
        <dbReference type="ChEBI" id="CHEBI:57609"/>
        <dbReference type="ChEBI" id="CHEBI:58087"/>
        <dbReference type="EC" id="3.5.1.18"/>
    </reaction>
</comment>
<comment type="cofactor">
    <cofactor evidence="1">
        <name>Zn(2+)</name>
        <dbReference type="ChEBI" id="CHEBI:29105"/>
    </cofactor>
    <cofactor evidence="1">
        <name>Co(2+)</name>
        <dbReference type="ChEBI" id="CHEBI:48828"/>
    </cofactor>
    <text evidence="1">Binds 2 Zn(2+) or Co(2+) ions per subunit.</text>
</comment>
<comment type="pathway">
    <text evidence="1">Amino-acid biosynthesis; L-lysine biosynthesis via DAP pathway; LL-2,6-diaminopimelate from (S)-tetrahydrodipicolinate (succinylase route): step 3/3.</text>
</comment>
<comment type="subunit">
    <text evidence="1">Homodimer.</text>
</comment>
<comment type="similarity">
    <text evidence="1">Belongs to the peptidase M20A family. DapE subfamily.</text>
</comment>
<proteinExistence type="inferred from homology"/>
<gene>
    <name evidence="1" type="primary">dapE</name>
    <name type="ordered locus">Tcr_1291</name>
</gene>
<dbReference type="EC" id="3.5.1.18" evidence="1"/>
<dbReference type="EMBL" id="CP000109">
    <property type="protein sequence ID" value="ABB41886.1"/>
    <property type="molecule type" value="Genomic_DNA"/>
</dbReference>
<dbReference type="SMR" id="Q31G37"/>
<dbReference type="STRING" id="317025.Tcr_1291"/>
<dbReference type="KEGG" id="tcx:Tcr_1291"/>
<dbReference type="eggNOG" id="COG0624">
    <property type="taxonomic scope" value="Bacteria"/>
</dbReference>
<dbReference type="HOGENOM" id="CLU_021802_4_0_6"/>
<dbReference type="OrthoDB" id="9809784at2"/>
<dbReference type="UniPathway" id="UPA00034">
    <property type="reaction ID" value="UER00021"/>
</dbReference>
<dbReference type="GO" id="GO:0008777">
    <property type="term" value="F:acetylornithine deacetylase activity"/>
    <property type="evidence" value="ECO:0007669"/>
    <property type="project" value="TreeGrafter"/>
</dbReference>
<dbReference type="GO" id="GO:0050897">
    <property type="term" value="F:cobalt ion binding"/>
    <property type="evidence" value="ECO:0007669"/>
    <property type="project" value="UniProtKB-UniRule"/>
</dbReference>
<dbReference type="GO" id="GO:0009014">
    <property type="term" value="F:succinyl-diaminopimelate desuccinylase activity"/>
    <property type="evidence" value="ECO:0007669"/>
    <property type="project" value="UniProtKB-UniRule"/>
</dbReference>
<dbReference type="GO" id="GO:0008270">
    <property type="term" value="F:zinc ion binding"/>
    <property type="evidence" value="ECO:0007669"/>
    <property type="project" value="UniProtKB-UniRule"/>
</dbReference>
<dbReference type="GO" id="GO:0019877">
    <property type="term" value="P:diaminopimelate biosynthetic process"/>
    <property type="evidence" value="ECO:0007669"/>
    <property type="project" value="UniProtKB-UniRule"/>
</dbReference>
<dbReference type="GO" id="GO:0006526">
    <property type="term" value="P:L-arginine biosynthetic process"/>
    <property type="evidence" value="ECO:0007669"/>
    <property type="project" value="TreeGrafter"/>
</dbReference>
<dbReference type="GO" id="GO:0009089">
    <property type="term" value="P:lysine biosynthetic process via diaminopimelate"/>
    <property type="evidence" value="ECO:0007669"/>
    <property type="project" value="UniProtKB-UniRule"/>
</dbReference>
<dbReference type="CDD" id="cd03891">
    <property type="entry name" value="M20_DapE_proteobac"/>
    <property type="match status" value="1"/>
</dbReference>
<dbReference type="FunFam" id="3.30.70.360:FF:000011">
    <property type="entry name" value="Succinyl-diaminopimelate desuccinylase"/>
    <property type="match status" value="1"/>
</dbReference>
<dbReference type="FunFam" id="3.40.630.10:FF:000005">
    <property type="entry name" value="Succinyl-diaminopimelate desuccinylase"/>
    <property type="match status" value="1"/>
</dbReference>
<dbReference type="Gene3D" id="1.10.150.900">
    <property type="match status" value="1"/>
</dbReference>
<dbReference type="Gene3D" id="3.30.70.360">
    <property type="match status" value="1"/>
</dbReference>
<dbReference type="Gene3D" id="3.40.630.10">
    <property type="entry name" value="Zn peptidases"/>
    <property type="match status" value="1"/>
</dbReference>
<dbReference type="HAMAP" id="MF_01690">
    <property type="entry name" value="DapE"/>
    <property type="match status" value="1"/>
</dbReference>
<dbReference type="InterPro" id="IPR001261">
    <property type="entry name" value="ArgE/DapE_CS"/>
</dbReference>
<dbReference type="InterPro" id="IPR036264">
    <property type="entry name" value="Bact_exopeptidase_dim_dom"/>
</dbReference>
<dbReference type="InterPro" id="IPR005941">
    <property type="entry name" value="DapE_proteobac"/>
</dbReference>
<dbReference type="InterPro" id="IPR002933">
    <property type="entry name" value="Peptidase_M20"/>
</dbReference>
<dbReference type="InterPro" id="IPR011650">
    <property type="entry name" value="Peptidase_M20_dimer"/>
</dbReference>
<dbReference type="InterPro" id="IPR050072">
    <property type="entry name" value="Peptidase_M20A"/>
</dbReference>
<dbReference type="NCBIfam" id="TIGR01246">
    <property type="entry name" value="dapE_proteo"/>
    <property type="match status" value="1"/>
</dbReference>
<dbReference type="NCBIfam" id="NF009557">
    <property type="entry name" value="PRK13009.1"/>
    <property type="match status" value="1"/>
</dbReference>
<dbReference type="PANTHER" id="PTHR43808">
    <property type="entry name" value="ACETYLORNITHINE DEACETYLASE"/>
    <property type="match status" value="1"/>
</dbReference>
<dbReference type="PANTHER" id="PTHR43808:SF31">
    <property type="entry name" value="N-ACETYL-L-CITRULLINE DEACETYLASE"/>
    <property type="match status" value="1"/>
</dbReference>
<dbReference type="Pfam" id="PF07687">
    <property type="entry name" value="M20_dimer"/>
    <property type="match status" value="1"/>
</dbReference>
<dbReference type="Pfam" id="PF01546">
    <property type="entry name" value="Peptidase_M20"/>
    <property type="match status" value="1"/>
</dbReference>
<dbReference type="SUPFAM" id="SSF55031">
    <property type="entry name" value="Bacterial exopeptidase dimerisation domain"/>
    <property type="match status" value="1"/>
</dbReference>
<dbReference type="SUPFAM" id="SSF53187">
    <property type="entry name" value="Zn-dependent exopeptidases"/>
    <property type="match status" value="1"/>
</dbReference>
<dbReference type="PROSITE" id="PS00759">
    <property type="entry name" value="ARGE_DAPE_CPG2_2"/>
    <property type="match status" value="1"/>
</dbReference>
<protein>
    <recommendedName>
        <fullName evidence="1">Succinyl-diaminopimelate desuccinylase</fullName>
        <shortName evidence="1">SDAP desuccinylase</shortName>
        <ecNumber evidence="1">3.5.1.18</ecNumber>
    </recommendedName>
    <alternativeName>
        <fullName evidence="1">N-succinyl-LL-2,6-diaminoheptanedioate amidohydrolase</fullName>
    </alternativeName>
</protein>
<organism>
    <name type="scientific">Hydrogenovibrio crunogenus (strain DSM 25203 / XCL-2)</name>
    <name type="common">Thiomicrospira crunogena</name>
    <dbReference type="NCBI Taxonomy" id="317025"/>
    <lineage>
        <taxon>Bacteria</taxon>
        <taxon>Pseudomonadati</taxon>
        <taxon>Pseudomonadota</taxon>
        <taxon>Gammaproteobacteria</taxon>
        <taxon>Thiotrichales</taxon>
        <taxon>Piscirickettsiaceae</taxon>
        <taxon>Hydrogenovibrio</taxon>
    </lineage>
</organism>
<accession>Q31G37</accession>
<name>DAPE_HYDCU</name>